<organism>
    <name type="scientific">Listeria monocytogenes serotype 4b (strain F2365)</name>
    <dbReference type="NCBI Taxonomy" id="265669"/>
    <lineage>
        <taxon>Bacteria</taxon>
        <taxon>Bacillati</taxon>
        <taxon>Bacillota</taxon>
        <taxon>Bacilli</taxon>
        <taxon>Bacillales</taxon>
        <taxon>Listeriaceae</taxon>
        <taxon>Listeria</taxon>
    </lineage>
</organism>
<evidence type="ECO:0000255" key="1">
    <source>
        <dbReference type="HAMAP-Rule" id="MF_00534"/>
    </source>
</evidence>
<protein>
    <recommendedName>
        <fullName evidence="1">Asparagine--tRNA ligase</fullName>
        <ecNumber evidence="1">6.1.1.22</ecNumber>
    </recommendedName>
    <alternativeName>
        <fullName evidence="1">Asparaginyl-tRNA synthetase</fullName>
        <shortName evidence="1">AsnRS</shortName>
    </alternativeName>
</protein>
<keyword id="KW-0030">Aminoacyl-tRNA synthetase</keyword>
<keyword id="KW-0067">ATP-binding</keyword>
<keyword id="KW-0963">Cytoplasm</keyword>
<keyword id="KW-0436">Ligase</keyword>
<keyword id="KW-0547">Nucleotide-binding</keyword>
<keyword id="KW-0648">Protein biosynthesis</keyword>
<feature type="chain" id="PRO_0000176423" description="Asparagine--tRNA ligase">
    <location>
        <begin position="1"/>
        <end position="430"/>
    </location>
</feature>
<name>SYN_LISMF</name>
<accession>Q71YB9</accession>
<reference key="1">
    <citation type="journal article" date="2004" name="Nucleic Acids Res.">
        <title>Whole genome comparisons of serotype 4b and 1/2a strains of the food-borne pathogen Listeria monocytogenes reveal new insights into the core genome components of this species.</title>
        <authorList>
            <person name="Nelson K.E."/>
            <person name="Fouts D.E."/>
            <person name="Mongodin E.F."/>
            <person name="Ravel J."/>
            <person name="DeBoy R.T."/>
            <person name="Kolonay J.F."/>
            <person name="Rasko D.A."/>
            <person name="Angiuoli S.V."/>
            <person name="Gill S.R."/>
            <person name="Paulsen I.T."/>
            <person name="Peterson J.D."/>
            <person name="White O."/>
            <person name="Nelson W.C."/>
            <person name="Nierman W.C."/>
            <person name="Beanan M.J."/>
            <person name="Brinkac L.M."/>
            <person name="Daugherty S.C."/>
            <person name="Dodson R.J."/>
            <person name="Durkin A.S."/>
            <person name="Madupu R."/>
            <person name="Haft D.H."/>
            <person name="Selengut J."/>
            <person name="Van Aken S.E."/>
            <person name="Khouri H.M."/>
            <person name="Fedorova N."/>
            <person name="Forberger H.A."/>
            <person name="Tran B."/>
            <person name="Kathariou S."/>
            <person name="Wonderling L.D."/>
            <person name="Uhlich G.A."/>
            <person name="Bayles D.O."/>
            <person name="Luchansky J.B."/>
            <person name="Fraser C.M."/>
        </authorList>
    </citation>
    <scope>NUCLEOTIDE SEQUENCE [LARGE SCALE GENOMIC DNA]</scope>
    <source>
        <strain>F2365</strain>
    </source>
</reference>
<proteinExistence type="inferred from homology"/>
<dbReference type="EC" id="6.1.1.22" evidence="1"/>
<dbReference type="EMBL" id="AE017262">
    <property type="protein sequence ID" value="AAT04695.1"/>
    <property type="molecule type" value="Genomic_DNA"/>
</dbReference>
<dbReference type="RefSeq" id="WP_003726759.1">
    <property type="nucleotide sequence ID" value="NC_002973.6"/>
</dbReference>
<dbReference type="SMR" id="Q71YB9"/>
<dbReference type="KEGG" id="lmf:LMOf2365_1925"/>
<dbReference type="HOGENOM" id="CLU_004553_2_0_9"/>
<dbReference type="GO" id="GO:0005737">
    <property type="term" value="C:cytoplasm"/>
    <property type="evidence" value="ECO:0007669"/>
    <property type="project" value="UniProtKB-SubCell"/>
</dbReference>
<dbReference type="GO" id="GO:0004816">
    <property type="term" value="F:asparagine-tRNA ligase activity"/>
    <property type="evidence" value="ECO:0007669"/>
    <property type="project" value="UniProtKB-UniRule"/>
</dbReference>
<dbReference type="GO" id="GO:0005524">
    <property type="term" value="F:ATP binding"/>
    <property type="evidence" value="ECO:0007669"/>
    <property type="project" value="UniProtKB-UniRule"/>
</dbReference>
<dbReference type="GO" id="GO:0140096">
    <property type="term" value="F:catalytic activity, acting on a protein"/>
    <property type="evidence" value="ECO:0007669"/>
    <property type="project" value="UniProtKB-ARBA"/>
</dbReference>
<dbReference type="GO" id="GO:0003676">
    <property type="term" value="F:nucleic acid binding"/>
    <property type="evidence" value="ECO:0007669"/>
    <property type="project" value="InterPro"/>
</dbReference>
<dbReference type="GO" id="GO:0016740">
    <property type="term" value="F:transferase activity"/>
    <property type="evidence" value="ECO:0007669"/>
    <property type="project" value="UniProtKB-ARBA"/>
</dbReference>
<dbReference type="GO" id="GO:0006421">
    <property type="term" value="P:asparaginyl-tRNA aminoacylation"/>
    <property type="evidence" value="ECO:0007669"/>
    <property type="project" value="UniProtKB-UniRule"/>
</dbReference>
<dbReference type="CDD" id="cd04323">
    <property type="entry name" value="AsnRS_cyto_like_N"/>
    <property type="match status" value="1"/>
</dbReference>
<dbReference type="CDD" id="cd00776">
    <property type="entry name" value="AsxRS_core"/>
    <property type="match status" value="1"/>
</dbReference>
<dbReference type="Gene3D" id="3.30.930.10">
    <property type="entry name" value="Bira Bifunctional Protein, Domain 2"/>
    <property type="match status" value="1"/>
</dbReference>
<dbReference type="Gene3D" id="2.40.50.140">
    <property type="entry name" value="Nucleic acid-binding proteins"/>
    <property type="match status" value="1"/>
</dbReference>
<dbReference type="HAMAP" id="MF_00534">
    <property type="entry name" value="Asn_tRNA_synth"/>
    <property type="match status" value="1"/>
</dbReference>
<dbReference type="InterPro" id="IPR004364">
    <property type="entry name" value="Aa-tRNA-synt_II"/>
</dbReference>
<dbReference type="InterPro" id="IPR006195">
    <property type="entry name" value="aa-tRNA-synth_II"/>
</dbReference>
<dbReference type="InterPro" id="IPR045864">
    <property type="entry name" value="aa-tRNA-synth_II/BPL/LPL"/>
</dbReference>
<dbReference type="InterPro" id="IPR004522">
    <property type="entry name" value="Asn-tRNA-ligase"/>
</dbReference>
<dbReference type="InterPro" id="IPR002312">
    <property type="entry name" value="Asp/Asn-tRNA-synth_IIb"/>
</dbReference>
<dbReference type="InterPro" id="IPR012340">
    <property type="entry name" value="NA-bd_OB-fold"/>
</dbReference>
<dbReference type="InterPro" id="IPR004365">
    <property type="entry name" value="NA-bd_OB_tRNA"/>
</dbReference>
<dbReference type="NCBIfam" id="TIGR00457">
    <property type="entry name" value="asnS"/>
    <property type="match status" value="1"/>
</dbReference>
<dbReference type="NCBIfam" id="NF003037">
    <property type="entry name" value="PRK03932.1"/>
    <property type="match status" value="1"/>
</dbReference>
<dbReference type="NCBIfam" id="NF003483">
    <property type="entry name" value="PRK05159.1"/>
    <property type="match status" value="1"/>
</dbReference>
<dbReference type="PANTHER" id="PTHR22594:SF34">
    <property type="entry name" value="ASPARAGINE--TRNA LIGASE, MITOCHONDRIAL-RELATED"/>
    <property type="match status" value="1"/>
</dbReference>
<dbReference type="PANTHER" id="PTHR22594">
    <property type="entry name" value="ASPARTYL/LYSYL-TRNA SYNTHETASE"/>
    <property type="match status" value="1"/>
</dbReference>
<dbReference type="Pfam" id="PF00152">
    <property type="entry name" value="tRNA-synt_2"/>
    <property type="match status" value="1"/>
</dbReference>
<dbReference type="Pfam" id="PF01336">
    <property type="entry name" value="tRNA_anti-codon"/>
    <property type="match status" value="1"/>
</dbReference>
<dbReference type="PRINTS" id="PR01042">
    <property type="entry name" value="TRNASYNTHASP"/>
</dbReference>
<dbReference type="SUPFAM" id="SSF55681">
    <property type="entry name" value="Class II aaRS and biotin synthetases"/>
    <property type="match status" value="1"/>
</dbReference>
<dbReference type="SUPFAM" id="SSF50249">
    <property type="entry name" value="Nucleic acid-binding proteins"/>
    <property type="match status" value="1"/>
</dbReference>
<dbReference type="PROSITE" id="PS50862">
    <property type="entry name" value="AA_TRNA_LIGASE_II"/>
    <property type="match status" value="1"/>
</dbReference>
<gene>
    <name evidence="1" type="primary">asnS</name>
    <name type="ordered locus">LMOf2365_1925</name>
</gene>
<comment type="catalytic activity">
    <reaction evidence="1">
        <text>tRNA(Asn) + L-asparagine + ATP = L-asparaginyl-tRNA(Asn) + AMP + diphosphate + H(+)</text>
        <dbReference type="Rhea" id="RHEA:11180"/>
        <dbReference type="Rhea" id="RHEA-COMP:9659"/>
        <dbReference type="Rhea" id="RHEA-COMP:9674"/>
        <dbReference type="ChEBI" id="CHEBI:15378"/>
        <dbReference type="ChEBI" id="CHEBI:30616"/>
        <dbReference type="ChEBI" id="CHEBI:33019"/>
        <dbReference type="ChEBI" id="CHEBI:58048"/>
        <dbReference type="ChEBI" id="CHEBI:78442"/>
        <dbReference type="ChEBI" id="CHEBI:78515"/>
        <dbReference type="ChEBI" id="CHEBI:456215"/>
        <dbReference type="EC" id="6.1.1.22"/>
    </reaction>
</comment>
<comment type="subunit">
    <text evidence="1">Homodimer.</text>
</comment>
<comment type="subcellular location">
    <subcellularLocation>
        <location evidence="1">Cytoplasm</location>
    </subcellularLocation>
</comment>
<comment type="similarity">
    <text evidence="1">Belongs to the class-II aminoacyl-tRNA synthetase family.</text>
</comment>
<sequence>MKITINQASEFVGKEVTIGAWLANKRSSGKIAFLQLRDGTGFMQGVVVKAEVGDDIFATAKALTQETSLYVTGTINEDTRSPFGYEMAVSGVEVISESHDYPITPKEHGTEFLMDHRHLWLRSNRQHAIMKIRNEIIRASYEFFNKEGFLKIDPPILTGSAPEGTTELFHTKYFDEDAFLSQSGQLYMEAAAMAFGKVFSFGPTFRAEKSKTRRHLIEFWMIEPEMAFYKLEDSLQVQENYVAFLVKAVLDNCRLELDRLGRDVSHLEKMVAPFPRITYTEAIERLHELGFDDIVWGDDFGAPHETAIADSFEKPVFITHYPKAIKPFYMPEDPENDQVVLCADMIAPEGYGEIIGGSERIHDLETLQARMEDFDLDQEAYSWYLDLARYGSVPHSGFGLGLERTVAWISGTEHVRETIPFPRLLNRLYP</sequence>